<sequence>MASSVTLLLWSLLLLGTLSAIQAKKSKENLKEITHKVYFDVEIDGKAAGRIVMGLFGKTVPKTVENFRALCTGEKGIGKNGKALHYKGSSFHRIIPSFMLQGGDFTHGNGMGGESIYGEKFADENFKLKHTGPGFLSMANAGQDTNGSQFFITTVTTSWLDGRHVVFGKVVTGMDVVYKVEAEGNQSGTPKSKVVIVDSGELPL</sequence>
<accession>Q9SP02</accession>
<name>CP20A_ARATH</name>
<proteinExistence type="evidence at protein level"/>
<keyword id="KW-0143">Chaperone</keyword>
<keyword id="KW-0256">Endoplasmic reticulum</keyword>
<keyword id="KW-0413">Isomerase</keyword>
<keyword id="KW-1185">Reference proteome</keyword>
<keyword id="KW-0697">Rotamase</keyword>
<keyword id="KW-0964">Secreted</keyword>
<keyword id="KW-0732">Signal</keyword>
<evidence type="ECO:0000250" key="1"/>
<evidence type="ECO:0000255" key="2"/>
<evidence type="ECO:0000255" key="3">
    <source>
        <dbReference type="PROSITE-ProRule" id="PRU00156"/>
    </source>
</evidence>
<evidence type="ECO:0000269" key="4">
    <source>
    </source>
</evidence>
<evidence type="ECO:0000269" key="5">
    <source>
    </source>
</evidence>
<evidence type="ECO:0000305" key="6"/>
<feature type="signal peptide" evidence="2">
    <location>
        <begin position="1"/>
        <end position="23"/>
    </location>
</feature>
<feature type="chain" id="PRO_0000044627" description="Peptidyl-prolyl cis-trans isomerase CYP20-1">
    <location>
        <begin position="24"/>
        <end position="204"/>
    </location>
</feature>
<feature type="domain" description="PPIase cyclophilin-type" evidence="3">
    <location>
        <begin position="38"/>
        <end position="201"/>
    </location>
</feature>
<feature type="mutagenesis site" description="Reduced interaction with PP2AA1/RCN1." evidence="4">
    <original>ENFKL</original>
    <variation>AAFAA</variation>
    <variation>KNFEL</variation>
    <location>
        <begin position="124"/>
        <end position="128"/>
    </location>
</feature>
<organism>
    <name type="scientific">Arabidopsis thaliana</name>
    <name type="common">Mouse-ear cress</name>
    <dbReference type="NCBI Taxonomy" id="3702"/>
    <lineage>
        <taxon>Eukaryota</taxon>
        <taxon>Viridiplantae</taxon>
        <taxon>Streptophyta</taxon>
        <taxon>Embryophyta</taxon>
        <taxon>Tracheophyta</taxon>
        <taxon>Spermatophyta</taxon>
        <taxon>Magnoliopsida</taxon>
        <taxon>eudicotyledons</taxon>
        <taxon>Gunneridae</taxon>
        <taxon>Pentapetalae</taxon>
        <taxon>rosids</taxon>
        <taxon>malvids</taxon>
        <taxon>Brassicales</taxon>
        <taxon>Brassicaceae</taxon>
        <taxon>Camelineae</taxon>
        <taxon>Arabidopsis</taxon>
    </lineage>
</organism>
<reference key="1">
    <citation type="journal article" date="1999" name="Mol. Gen. Genet.">
        <title>Mutations in a new Arabidopsis cyclophilin disrupt its interaction with protein phosphatase 2A.</title>
        <authorList>
            <person name="Jackson K."/>
            <person name="Soell D."/>
        </authorList>
    </citation>
    <scope>NUCLEOTIDE SEQUENCE [MRNA]</scope>
    <scope>FUNCTION</scope>
    <scope>TISSUE SPECIFICITY</scope>
    <scope>INTERACTION WITH PP2AA1/RCN1</scope>
    <scope>MUTAGENESIS OF 124-GLU--LEU-128</scope>
    <source>
        <strain>cv. Wassilewskija</strain>
    </source>
</reference>
<reference key="2">
    <citation type="journal article" date="2000" name="DNA Res.">
        <title>Structural analysis of Arabidopsis thaliana chromosome 5. X. Sequence features of the regions of 3,076,755 bp covered by sixty P1 and TAC clones.</title>
        <authorList>
            <person name="Sato S."/>
            <person name="Nakamura Y."/>
            <person name="Kaneko T."/>
            <person name="Katoh T."/>
            <person name="Asamizu E."/>
            <person name="Kotani H."/>
            <person name="Tabata S."/>
        </authorList>
    </citation>
    <scope>NUCLEOTIDE SEQUENCE [LARGE SCALE GENOMIC DNA]</scope>
    <source>
        <strain>cv. Columbia</strain>
    </source>
</reference>
<reference key="3">
    <citation type="journal article" date="2017" name="Plant J.">
        <title>Araport11: a complete reannotation of the Arabidopsis thaliana reference genome.</title>
        <authorList>
            <person name="Cheng C.Y."/>
            <person name="Krishnakumar V."/>
            <person name="Chan A.P."/>
            <person name="Thibaud-Nissen F."/>
            <person name="Schobel S."/>
            <person name="Town C.D."/>
        </authorList>
    </citation>
    <scope>GENOME REANNOTATION</scope>
    <source>
        <strain>cv. Columbia</strain>
    </source>
</reference>
<reference key="4">
    <citation type="journal article" date="2003" name="Science">
        <title>Empirical analysis of transcriptional activity in the Arabidopsis genome.</title>
        <authorList>
            <person name="Yamada K."/>
            <person name="Lim J."/>
            <person name="Dale J.M."/>
            <person name="Chen H."/>
            <person name="Shinn P."/>
            <person name="Palm C.J."/>
            <person name="Southwick A.M."/>
            <person name="Wu H.C."/>
            <person name="Kim C.J."/>
            <person name="Nguyen M."/>
            <person name="Pham P.K."/>
            <person name="Cheuk R.F."/>
            <person name="Karlin-Newmann G."/>
            <person name="Liu S.X."/>
            <person name="Lam B."/>
            <person name="Sakano H."/>
            <person name="Wu T."/>
            <person name="Yu G."/>
            <person name="Miranda M."/>
            <person name="Quach H.L."/>
            <person name="Tripp M."/>
            <person name="Chang C.H."/>
            <person name="Lee J.M."/>
            <person name="Toriumi M.J."/>
            <person name="Chan M.M."/>
            <person name="Tang C.C."/>
            <person name="Onodera C.S."/>
            <person name="Deng J.M."/>
            <person name="Akiyama K."/>
            <person name="Ansari Y."/>
            <person name="Arakawa T."/>
            <person name="Banh J."/>
            <person name="Banno F."/>
            <person name="Bowser L."/>
            <person name="Brooks S.Y."/>
            <person name="Carninci P."/>
            <person name="Chao Q."/>
            <person name="Choy N."/>
            <person name="Enju A."/>
            <person name="Goldsmith A.D."/>
            <person name="Gurjal M."/>
            <person name="Hansen N.F."/>
            <person name="Hayashizaki Y."/>
            <person name="Johnson-Hopson C."/>
            <person name="Hsuan V.W."/>
            <person name="Iida K."/>
            <person name="Karnes M."/>
            <person name="Khan S."/>
            <person name="Koesema E."/>
            <person name="Ishida J."/>
            <person name="Jiang P.X."/>
            <person name="Jones T."/>
            <person name="Kawai J."/>
            <person name="Kamiya A."/>
            <person name="Meyers C."/>
            <person name="Nakajima M."/>
            <person name="Narusaka M."/>
            <person name="Seki M."/>
            <person name="Sakurai T."/>
            <person name="Satou M."/>
            <person name="Tamse R."/>
            <person name="Vaysberg M."/>
            <person name="Wallender E.K."/>
            <person name="Wong C."/>
            <person name="Yamamura Y."/>
            <person name="Yuan S."/>
            <person name="Shinozaki K."/>
            <person name="Davis R.W."/>
            <person name="Theologis A."/>
            <person name="Ecker J.R."/>
        </authorList>
    </citation>
    <scope>NUCLEOTIDE SEQUENCE [LARGE SCALE MRNA]</scope>
    <source>
        <strain>cv. Columbia</strain>
    </source>
</reference>
<reference key="5">
    <citation type="submission" date="2002-03" db="EMBL/GenBank/DDBJ databases">
        <title>Full-length cDNA from Arabidopsis thaliana.</title>
        <authorList>
            <person name="Brover V.V."/>
            <person name="Troukhan M.E."/>
            <person name="Alexandrov N.A."/>
            <person name="Lu Y.-P."/>
            <person name="Flavell R.B."/>
            <person name="Feldmann K.A."/>
        </authorList>
    </citation>
    <scope>NUCLEOTIDE SEQUENCE [LARGE SCALE MRNA]</scope>
</reference>
<reference key="6">
    <citation type="journal article" date="2004" name="Plant Physiol.">
        <title>Immunophilins and parvulins. Superfamily of peptidyl prolyl isomerases in Arabidopsis.</title>
        <authorList>
            <person name="He Z."/>
            <person name="Li L."/>
            <person name="Luan S."/>
        </authorList>
    </citation>
    <scope>TISSUE SPECIFICITY</scope>
    <scope>GENE FAMILY</scope>
    <scope>NOMENCLATURE</scope>
</reference>
<reference key="7">
    <citation type="journal article" date="2004" name="Plant Physiol.">
        <title>The Arabidopsis cyclophilin gene family.</title>
        <authorList>
            <person name="Romano P.G.N."/>
            <person name="Horton P."/>
            <person name="Gray J.E."/>
        </authorList>
    </citation>
    <scope>GENE FAMILY</scope>
    <scope>NOMENCLATURE</scope>
</reference>
<protein>
    <recommendedName>
        <fullName>Peptidyl-prolyl cis-trans isomerase CYP20-1</fullName>
        <shortName>PPIase CYP20-1</shortName>
        <ecNumber>5.2.1.8</ecNumber>
    </recommendedName>
    <alternativeName>
        <fullName>Cyclophilin of 20 kDa 1</fullName>
    </alternativeName>
    <alternativeName>
        <fullName>Rotamase CYP20-1</fullName>
    </alternativeName>
    <alternativeName>
        <fullName>Rotamase cyclophilin-7</fullName>
    </alternativeName>
</protein>
<dbReference type="EC" id="5.2.1.8"/>
<dbReference type="EMBL" id="AF192490">
    <property type="protein sequence ID" value="AAF05760.1"/>
    <property type="molecule type" value="mRNA"/>
</dbReference>
<dbReference type="EMBL" id="AB020755">
    <property type="protein sequence ID" value="BAA97339.1"/>
    <property type="molecule type" value="Genomic_DNA"/>
</dbReference>
<dbReference type="EMBL" id="CP002688">
    <property type="protein sequence ID" value="AED97088.1"/>
    <property type="molecule type" value="Genomic_DNA"/>
</dbReference>
<dbReference type="EMBL" id="AY048227">
    <property type="protein sequence ID" value="AAK82490.1"/>
    <property type="molecule type" value="mRNA"/>
</dbReference>
<dbReference type="EMBL" id="AY094017">
    <property type="protein sequence ID" value="AAM16173.1"/>
    <property type="molecule type" value="mRNA"/>
</dbReference>
<dbReference type="EMBL" id="AY086471">
    <property type="protein sequence ID" value="AAM63473.1"/>
    <property type="molecule type" value="mRNA"/>
</dbReference>
<dbReference type="PIR" id="T50838">
    <property type="entry name" value="T50838"/>
</dbReference>
<dbReference type="RefSeq" id="NP_200679.1">
    <property type="nucleotide sequence ID" value="NM_125258.5"/>
</dbReference>
<dbReference type="SMR" id="Q9SP02"/>
<dbReference type="FunCoup" id="Q9SP02">
    <property type="interactions" value="1061"/>
</dbReference>
<dbReference type="STRING" id="3702.Q9SP02"/>
<dbReference type="PaxDb" id="3702-AT5G58710.1"/>
<dbReference type="ProteomicsDB" id="224490"/>
<dbReference type="EnsemblPlants" id="AT5G58710.1">
    <property type="protein sequence ID" value="AT5G58710.1"/>
    <property type="gene ID" value="AT5G58710"/>
</dbReference>
<dbReference type="GeneID" id="835985"/>
<dbReference type="Gramene" id="AT5G58710.1">
    <property type="protein sequence ID" value="AT5G58710.1"/>
    <property type="gene ID" value="AT5G58710"/>
</dbReference>
<dbReference type="KEGG" id="ath:AT5G58710"/>
<dbReference type="Araport" id="AT5G58710"/>
<dbReference type="TAIR" id="AT5G58710">
    <property type="gene designation" value="ROC7"/>
</dbReference>
<dbReference type="eggNOG" id="KOG0865">
    <property type="taxonomic scope" value="Eukaryota"/>
</dbReference>
<dbReference type="HOGENOM" id="CLU_012062_4_2_1"/>
<dbReference type="InParanoid" id="Q9SP02"/>
<dbReference type="OMA" id="FFICMGK"/>
<dbReference type="OrthoDB" id="193499at2759"/>
<dbReference type="PhylomeDB" id="Q9SP02"/>
<dbReference type="CD-CODE" id="4299E36E">
    <property type="entry name" value="Nucleolus"/>
</dbReference>
<dbReference type="PRO" id="PR:Q9SP02"/>
<dbReference type="Proteomes" id="UP000006548">
    <property type="component" value="Chromosome 5"/>
</dbReference>
<dbReference type="ExpressionAtlas" id="Q9SP02">
    <property type="expression patterns" value="baseline and differential"/>
</dbReference>
<dbReference type="GO" id="GO:0009507">
    <property type="term" value="C:chloroplast"/>
    <property type="evidence" value="ECO:0007005"/>
    <property type="project" value="TAIR"/>
</dbReference>
<dbReference type="GO" id="GO:0005783">
    <property type="term" value="C:endoplasmic reticulum"/>
    <property type="evidence" value="ECO:0007005"/>
    <property type="project" value="TAIR"/>
</dbReference>
<dbReference type="GO" id="GO:0005576">
    <property type="term" value="C:extracellular region"/>
    <property type="evidence" value="ECO:0007669"/>
    <property type="project" value="UniProtKB-SubCell"/>
</dbReference>
<dbReference type="GO" id="GO:0009506">
    <property type="term" value="C:plasmodesma"/>
    <property type="evidence" value="ECO:0007005"/>
    <property type="project" value="TAIR"/>
</dbReference>
<dbReference type="GO" id="GO:0009536">
    <property type="term" value="C:plastid"/>
    <property type="evidence" value="ECO:0007005"/>
    <property type="project" value="TAIR"/>
</dbReference>
<dbReference type="GO" id="GO:0003755">
    <property type="term" value="F:peptidyl-prolyl cis-trans isomerase activity"/>
    <property type="evidence" value="ECO:0007669"/>
    <property type="project" value="UniProtKB-KW"/>
</dbReference>
<dbReference type="GO" id="GO:0006457">
    <property type="term" value="P:protein folding"/>
    <property type="evidence" value="ECO:0007669"/>
    <property type="project" value="InterPro"/>
</dbReference>
<dbReference type="GO" id="GO:0048364">
    <property type="term" value="P:root development"/>
    <property type="evidence" value="ECO:0000315"/>
    <property type="project" value="TAIR"/>
</dbReference>
<dbReference type="CDD" id="cd01926">
    <property type="entry name" value="cyclophilin_ABH_like"/>
    <property type="match status" value="1"/>
</dbReference>
<dbReference type="FunFam" id="2.40.100.10:FF:000002">
    <property type="entry name" value="Peptidyl-prolyl cis-trans isomerase"/>
    <property type="match status" value="1"/>
</dbReference>
<dbReference type="Gene3D" id="2.40.100.10">
    <property type="entry name" value="Cyclophilin-like"/>
    <property type="match status" value="1"/>
</dbReference>
<dbReference type="InterPro" id="IPR029000">
    <property type="entry name" value="Cyclophilin-like_dom_sf"/>
</dbReference>
<dbReference type="InterPro" id="IPR024936">
    <property type="entry name" value="Cyclophilin-type_PPIase"/>
</dbReference>
<dbReference type="InterPro" id="IPR020892">
    <property type="entry name" value="Cyclophilin-type_PPIase_CS"/>
</dbReference>
<dbReference type="InterPro" id="IPR002130">
    <property type="entry name" value="Cyclophilin-type_PPIase_dom"/>
</dbReference>
<dbReference type="PANTHER" id="PTHR11071">
    <property type="entry name" value="PEPTIDYL-PROLYL CIS-TRANS ISOMERASE"/>
    <property type="match status" value="1"/>
</dbReference>
<dbReference type="PANTHER" id="PTHR11071:SF550">
    <property type="entry name" value="PEPTIDYL-PROLYL CIS-TRANS ISOMERASE CYP20-1"/>
    <property type="match status" value="1"/>
</dbReference>
<dbReference type="Pfam" id="PF00160">
    <property type="entry name" value="Pro_isomerase"/>
    <property type="match status" value="1"/>
</dbReference>
<dbReference type="PIRSF" id="PIRSF001467">
    <property type="entry name" value="Peptidylpro_ismrse"/>
    <property type="match status" value="1"/>
</dbReference>
<dbReference type="PRINTS" id="PR00153">
    <property type="entry name" value="CSAPPISMRASE"/>
</dbReference>
<dbReference type="SUPFAM" id="SSF50891">
    <property type="entry name" value="Cyclophilin-like"/>
    <property type="match status" value="1"/>
</dbReference>
<dbReference type="PROSITE" id="PS00170">
    <property type="entry name" value="CSA_PPIASE_1"/>
    <property type="match status" value="1"/>
</dbReference>
<dbReference type="PROSITE" id="PS50072">
    <property type="entry name" value="CSA_PPIASE_2"/>
    <property type="match status" value="1"/>
</dbReference>
<gene>
    <name type="primary">CYP20-1</name>
    <name type="synonym">ROC7</name>
    <name type="ordered locus">At5g58710</name>
    <name type="ORF">MZN1.15</name>
</gene>
<comment type="function">
    <text evidence="4">PPIases accelerate the folding of proteins. It catalyzes the cis-trans isomerization of proline imidic peptide bonds in oligopeptides. Seems to be involved in root development.</text>
</comment>
<comment type="catalytic activity">
    <reaction>
        <text>[protein]-peptidylproline (omega=180) = [protein]-peptidylproline (omega=0)</text>
        <dbReference type="Rhea" id="RHEA:16237"/>
        <dbReference type="Rhea" id="RHEA-COMP:10747"/>
        <dbReference type="Rhea" id="RHEA-COMP:10748"/>
        <dbReference type="ChEBI" id="CHEBI:83833"/>
        <dbReference type="ChEBI" id="CHEBI:83834"/>
        <dbReference type="EC" id="5.2.1.8"/>
    </reaction>
</comment>
<comment type="activity regulation">
    <text evidence="1">Binds cyclosporin A (CsA). CsA mediates some of its effects via an inhibitory action on PPIase (By similarity).</text>
</comment>
<comment type="subunit">
    <text evidence="4">Interacts with the PP2A A subunit PP2AA1/RCN1.</text>
</comment>
<comment type="subcellular location">
    <subcellularLocation>
        <location evidence="1">Endoplasmic reticulum</location>
    </subcellularLocation>
    <subcellularLocation>
        <location evidence="1">Secreted</location>
    </subcellularLocation>
</comment>
<comment type="tissue specificity">
    <text evidence="4 5">Ubiquitous, mostly in aerial organs. Higher levels in leaf and buds, and lower levels in seedlings.</text>
</comment>
<comment type="similarity">
    <text evidence="6">Belongs to the cyclophilin-type PPIase family.</text>
</comment>